<sequence>MSADKSQLSSPPQLWQLTSPASRRRWRCASSLRPVSLCGRGWCESTRWVALVSGDHRGRGVIYYSYYCNFVSLNLFRAARLTTPCICLIYPDDFFLRTRNGRHLSRHSFIDHDSLMIRLPLTRQRENRKVKDDRALGVLFSFSIMKARGSRENASKRRPSQTQYDTHLRTNQRITITRTAESHEPVNQRHKIFTQSFLRTFRNQQVNKDQQRKTILELKKVASLPYEPAAFSIYTRYNIFINVSSLSPDVILFL</sequence>
<protein>
    <recommendedName>
        <fullName>30 kDa major early protein</fullName>
    </recommendedName>
</protein>
<keyword id="KW-0244">Early protein</keyword>
<proteinExistence type="predicted"/>
<feature type="chain" id="PRO_0000115246" description="30 kDa major early protein">
    <location>
        <begin position="1"/>
        <end position="254"/>
    </location>
</feature>
<accession>P06724</accession>
<organism>
    <name type="scientific">Human cytomegalovirus (strain Eisenhardt)</name>
    <name type="common">HHV-5</name>
    <name type="synonym">Human herpesvirus 5</name>
    <dbReference type="NCBI Taxonomy" id="10362"/>
    <lineage>
        <taxon>Viruses</taxon>
        <taxon>Duplodnaviria</taxon>
        <taxon>Heunggongvirae</taxon>
        <taxon>Peploviricota</taxon>
        <taxon>Herviviricetes</taxon>
        <taxon>Herpesvirales</taxon>
        <taxon>Orthoherpesviridae</taxon>
        <taxon>Betaherpesvirinae</taxon>
        <taxon>Cytomegalovirus</taxon>
        <taxon>Cytomegalovirus humanbeta5</taxon>
        <taxon>Human cytomegalovirus</taxon>
    </lineage>
</organism>
<organismHost>
    <name type="scientific">Homo sapiens</name>
    <name type="common">Human</name>
    <dbReference type="NCBI Taxonomy" id="9606"/>
</organismHost>
<reference key="1">
    <citation type="journal article" date="1986" name="Virology">
        <title>Characterization of a major early gene from the human cytomegalovirus long inverted repeat; predicted amino acid sequence of a 30-kDa protein encoded by the 1.2-kb mRNA.</title>
        <authorList>
            <person name="Hutchinson N.I."/>
            <person name="Tocci M.J."/>
        </authorList>
    </citation>
    <scope>NUCLEOTIDE SEQUENCE [GENOMIC DNA]</scope>
</reference>
<name>V30K_HCMVE</name>
<dbReference type="EMBL" id="M14789">
    <property type="protein sequence ID" value="AAA45978.1"/>
    <property type="molecule type" value="Genomic_DNA"/>
</dbReference>
<dbReference type="PIR" id="A26899">
    <property type="entry name" value="WMBECT"/>
</dbReference>